<gene>
    <name type="primary">ftmPS</name>
    <name evidence="1" type="synonym">ftmA</name>
    <name type="ORF">NFIA_093690</name>
</gene>
<protein>
    <recommendedName>
        <fullName evidence="5">Nonribosomal peptide synthetase ftmPS</fullName>
        <ecNumber evidence="1">6.3.3.-</ecNumber>
    </recommendedName>
    <alternativeName>
        <fullName evidence="5">Brevianamide F synthase</fullName>
    </alternativeName>
    <alternativeName>
        <fullName evidence="1">Fumitremorgin biosynthesis protein A</fullName>
    </alternativeName>
</protein>
<keyword id="KW-0017">Alkaloid metabolism</keyword>
<keyword id="KW-0413">Isomerase</keyword>
<keyword id="KW-0436">Ligase</keyword>
<keyword id="KW-0596">Phosphopantetheine</keyword>
<keyword id="KW-0597">Phosphoprotein</keyword>
<keyword id="KW-1185">Reference proteome</keyword>
<keyword id="KW-0677">Repeat</keyword>
<keyword id="KW-0843">Virulence</keyword>
<accession>A1DA59</accession>
<reference key="1">
    <citation type="journal article" date="2008" name="PLoS Genet.">
        <title>Genomic islands in the pathogenic filamentous fungus Aspergillus fumigatus.</title>
        <authorList>
            <person name="Fedorova N.D."/>
            <person name="Khaldi N."/>
            <person name="Joardar V.S."/>
            <person name="Maiti R."/>
            <person name="Amedeo P."/>
            <person name="Anderson M.J."/>
            <person name="Crabtree J."/>
            <person name="Silva J.C."/>
            <person name="Badger J.H."/>
            <person name="Albarraq A."/>
            <person name="Angiuoli S."/>
            <person name="Bussey H."/>
            <person name="Bowyer P."/>
            <person name="Cotty P.J."/>
            <person name="Dyer P.S."/>
            <person name="Egan A."/>
            <person name="Galens K."/>
            <person name="Fraser-Liggett C.M."/>
            <person name="Haas B.J."/>
            <person name="Inman J.M."/>
            <person name="Kent R."/>
            <person name="Lemieux S."/>
            <person name="Malavazi I."/>
            <person name="Orvis J."/>
            <person name="Roemer T."/>
            <person name="Ronning C.M."/>
            <person name="Sundaram J.P."/>
            <person name="Sutton G."/>
            <person name="Turner G."/>
            <person name="Venter J.C."/>
            <person name="White O.R."/>
            <person name="Whitty B.R."/>
            <person name="Youngman P."/>
            <person name="Wolfe K.H."/>
            <person name="Goldman G.H."/>
            <person name="Wortman J.R."/>
            <person name="Jiang B."/>
            <person name="Denning D.W."/>
            <person name="Nierman W.C."/>
        </authorList>
    </citation>
    <scope>NUCLEOTIDE SEQUENCE [LARGE SCALE GENOMIC DNA]</scope>
    <source>
        <strain>ATCC 1020 / DSM 3700 / CBS 544.65 / FGSC A1164 / JCM 1740 / NRRL 181 / WB 181</strain>
    </source>
</reference>
<reference key="2">
    <citation type="journal article" date="2012" name="ChemBioChem">
        <title>Identification of the verruculogen prenyltransferase FtmPT3 by a combination of chemical, bioinformatic and biochemical approaches.</title>
        <authorList>
            <person name="Mundt K."/>
            <person name="Wollinsky B."/>
            <person name="Ruan H.L."/>
            <person name="Zhu T."/>
            <person name="Li S.M."/>
        </authorList>
    </citation>
    <scope>IDENTIFICATION</scope>
    <scope>FUNCTION</scope>
</reference>
<comment type="function">
    <text evidence="1 4">Nonribosomal peptide synthetase; part of the gene cluster that mediates the biosynthesis of fumitremorgins, indole alkaloids that carry not only intriguing chemical structures, but also interesting biological and pharmacological activities (PubMed:23109474). The biosynthesis of fumitremorgin-type alkaloids begins by condensation of the two amino acids L-tryptophan and L-proline to brevianamide F, catalyzed by the non-ribosomal peptide synthetase ftmPS/ftmA (By similarity). Brevianamide F is then prenylated by the prenyltransferase ftmPT1/ftmB in the presence of dimethylallyl diphosphate, resulting in the formation of tryprostatin B (By similarity). The three cytochrome P450 monooxygenases, ftmP450-1/ftmC, ftmP450-2/ftmE and ftmP450-3/FtmG, are responsible for the conversion of tryprostatin B to 6-hydroxytryprostatin B, tryprostatin A to fumitremorgin C and fumitremorgin C to 12,13-dihydroxyfumitremorgin C, respectively (By similarity). The putative methyltransferase ftmMT/ftmD is expected for the conversion of 6-hydroxytryprostatin B to tryprostatin A (By similarity). FtmPT2/FtmH catalyzes the prenylation of 12,13-dihydroxyfumitre-morgin C in the presence of dimethylallyl diphosphate, resulting in the formation of fumitremorgin B (By similarity). Fumitremorgin B is further converted to verruculogen by ftmOx1/ftmF via the insertion of an endoperoxide bond between the two prenyl moieties (By similarity). Finally, verruculogen is further converted to fumitremorgin A by the verruculogen prenyltransferase ftmPT3 (PubMed:23109474).</text>
</comment>
<comment type="catalytic activity">
    <reaction evidence="1">
        <text>L-proline + L-tryptophan + 2 ATP = brevianamide F + 2 AMP + 2 diphosphate + 2 H(+)</text>
        <dbReference type="Rhea" id="RHEA:35935"/>
        <dbReference type="ChEBI" id="CHEBI:15378"/>
        <dbReference type="ChEBI" id="CHEBI:30616"/>
        <dbReference type="ChEBI" id="CHEBI:33019"/>
        <dbReference type="ChEBI" id="CHEBI:57912"/>
        <dbReference type="ChEBI" id="CHEBI:60039"/>
        <dbReference type="ChEBI" id="CHEBI:64530"/>
        <dbReference type="ChEBI" id="CHEBI:456215"/>
    </reaction>
</comment>
<comment type="pathway">
    <text evidence="1">Mycotoxin biosynthesis.</text>
</comment>
<comment type="domain">
    <text evidence="1">NRP synthetases are composed of discrete domains (adenylation (A), thiolation (T) or peptidyl carrier protein (PCP) and condensation (C) domains) which when grouped together are referred to as a single module. Each module is responsible for the recognition (via the A domain) and incorporation of a single amino acid into the growing peptide product. Thus, an NRP synthetase is generally composed of one or more modules and can terminate in a thioesterase domain (TE) that releases the newly synthesized peptide from the enzyme. Occasionally, epimerase (E) domains (responsible for l- to d- amino acid conversion) are present within the NRP synthetase. NRPS13 has the following architecture: A-T-C-A-T-C.</text>
</comment>
<comment type="similarity">
    <text evidence="6">Belongs to the NRP synthetase family.</text>
</comment>
<evidence type="ECO:0000250" key="1">
    <source>
        <dbReference type="UniProtKB" id="Q4WAW3"/>
    </source>
</evidence>
<evidence type="ECO:0000255" key="2"/>
<evidence type="ECO:0000255" key="3">
    <source>
        <dbReference type="PROSITE-ProRule" id="PRU00258"/>
    </source>
</evidence>
<evidence type="ECO:0000269" key="4">
    <source>
    </source>
</evidence>
<evidence type="ECO:0000303" key="5">
    <source>
    </source>
</evidence>
<evidence type="ECO:0000305" key="6"/>
<name>FTMA_NEOFI</name>
<feature type="chain" id="PRO_0000424110" description="Nonribosomal peptide synthetase ftmPS">
    <location>
        <begin position="1"/>
        <end position="2212"/>
    </location>
</feature>
<feature type="domain" description="Carrier 1" evidence="3">
    <location>
        <begin position="592"/>
        <end position="669"/>
    </location>
</feature>
<feature type="domain" description="Carrier 2" evidence="3">
    <location>
        <begin position="1678"/>
        <end position="1757"/>
    </location>
</feature>
<feature type="region of interest" description="Adenylation 1" evidence="1 2">
    <location>
        <begin position="74"/>
        <end position="473"/>
    </location>
</feature>
<feature type="region of interest" description="Condensation 1" evidence="1 2">
    <location>
        <begin position="708"/>
        <end position="973"/>
    </location>
</feature>
<feature type="region of interest" description="Adenylation 2" evidence="1 2">
    <location>
        <begin position="1167"/>
        <end position="1564"/>
    </location>
</feature>
<feature type="region of interest" description="Condensation 2" evidence="1 2">
    <location>
        <begin position="1815"/>
        <end position="2070"/>
    </location>
</feature>
<feature type="modified residue" description="O-(pantetheine 4'-phosphoryl)serine" evidence="3">
    <location>
        <position position="629"/>
    </location>
</feature>
<feature type="modified residue" description="O-(pantetheine 4'-phosphoryl)serine" evidence="3">
    <location>
        <position position="1715"/>
    </location>
</feature>
<organism>
    <name type="scientific">Neosartorya fischeri (strain ATCC 1020 / DSM 3700 / CBS 544.65 / FGSC A1164 / JCM 1740 / NRRL 181 / WB 181)</name>
    <name type="common">Aspergillus fischerianus</name>
    <dbReference type="NCBI Taxonomy" id="331117"/>
    <lineage>
        <taxon>Eukaryota</taxon>
        <taxon>Fungi</taxon>
        <taxon>Dikarya</taxon>
        <taxon>Ascomycota</taxon>
        <taxon>Pezizomycotina</taxon>
        <taxon>Eurotiomycetes</taxon>
        <taxon>Eurotiomycetidae</taxon>
        <taxon>Eurotiales</taxon>
        <taxon>Aspergillaceae</taxon>
        <taxon>Aspergillus</taxon>
        <taxon>Aspergillus subgen. Fumigati</taxon>
    </lineage>
</organism>
<sequence>MALAVAAPSEWRGILPYNTSKDSPTVHSMKVATDVKNEQGEFGFWDTCVHTVVREHCQRSPDSPAVNAWDGSFTYAELDSLSDAIASVLILFGVKPESIIPIYMHKSRWTTVAILGVLKSGGAFTLLDPSHPRSRLEEICKEIQARFILTSEELSKQCSEMSSVLVVEHLSRACLLSPGQAGQTPSRPENAAYIAFTSGSTGKPKGIVIEHRSYCSGARSHLKVFGIDSTSRVLQFASYAFDVSIMETLSTLMAGGCLCVMSESERSDPNLFVESYKNFRISHCFMTPSFARTVQWTECCNPPPTLIVGGELMRPSDTRAYKAMGICCMNAYGPAECSVNVSVQSRVEDGVDPRNIGYTTGATAWIISPENPEQLMPPGTVGELLVEGPIVGRGYLNDPSATRQAFIDTPGWLRRHRKGTSYQHRVYRTGDLASQDSISGALLLHGRKDAQVKIRGQRVELPDIEHHLQQTLPDGDAEVIVEKVTFSDDGAEKLIAFVLIPPSSTGFITDNMGDRLFLAPQSQIMEQFAISKKHLQTNLPSYMVPDIFIPISTIPQTVSGKTDRKALRTRAAALSRRDVQCYLLSPTGDKRPPSTLKETTIRSLYSKVLNLPIDLIGMDDTFLRLGGDSLQAIRLVAAARTAGLVLHAKDILSSQSTLAEQSQRAGLIQTSDHTGEASTPFALLPVATRHDIVDLAQKQCRVSSKLIEDIYPCTALQEGMFMTSLRHPGMYTGQITFDIPDRMELPRLRAAWLSVVSKNAALRTRIIETHEGLMQAVIVDDFAWEEETDEMLPSGRWEVLEITKIGVPLVRFRYRPRHRQLIMTIHHSIWDGWSLRLVHEQLQRAYIGRDPLPSTSYRSFIQYGQDLPGADEFWASELAGVNAPIFPTLPSGNYRPCVNASHRHGVRKLVSTGRGEHTAATYIHLAWSLLVAHYTDADETVYGVTVNGRSADVPGIENIVGPTIATVPLRIRVNQEDTVKMALDQVQDSLARMIPYEQAGLQRISRCSRDASEACRFQTLLIIEAPADRDVACEKNEAKNFSIIRGTTQTGMDYTAFSPYAMMLIFRTSADKSAITLDITYDAQVIGCVEVERMAHQFEHVLRHIYKRATGRIGDISFLGPRDIEQVQQWNSYMPPADNRFLQELIFARCSRRPQASAIISWDGSWTYRELWAHSSFFARQLQRYGVTRGTPVAVCLDRSRWSIAVILAVLLAGGTCVLIDLLSPRQRVRDILQIVGAGIMVNSHATAPVTSGLCPTVIDVSLLVAQNDDSQTECPFNLDTWERGVGTPEDLAFIMFTSGSTGHPKGIEMPHRTLSTSIYHHSAGMKVKSSSRVLHFSSYAFDVSIYEIFTTLAAGGTICVPSEFDRMNNLSGFIQDTQVNWAFLTPSTARSLDPADVPLLTTLVLGGEAVTHESVEAWAKGRSLINGYGPAEATICGVGNIPEAGWKSGVIGQIVGGLGWVTVPSDPNRLAAVGAVGELLLEGPFLARGYLNLPEVTRAAFIDPPSWRTQIPAPSPYPFLYRTGDLVQYQPDGSIQYIGRKDSRIKLRGQLVDLSAVEASLMRVYPAAIQVVADVLVSENTTRLIAMMKLGPPVTETHDDPLFEAPDLAFNEAAASVQARLRAIVPPYMVPSMFIPLRHIPRTLTGKTDRRQLRDKLLSLSQSDLQRYIMSSSAKTPMSDDNERRLQEIWAEVLQLPCEAIGREDSFLLLGGESLATMKMVALARRVGFVFAVADVLNNTSLSTLAQFRHLITEDDIPSPSPSLSLSTIESQSLQKILRPLQNGGLIQGGNDIAAIHPVTAAQAFLVQRYPWSHFQFDLSGAISPSKLQTACTTLMARFTILRTVFVEHAGHLLQLVLREVRKCVHEITTDEPLDDFCNSLCQQQQGVCVVNSTALPTLFTLVSNRQLNRHRLLLRLAHAQYDLTTIPLIVQALADEYNGTLRAGFSSDFSYYLNHHMRQTNDDRAHTFWNQYLSGSFMTSTDQTADTTTPQERIFHVTGSCTVTPASHPLGITTATAVKAAVCLVLASRTGCTDIVVGQTVDARCSSADGTLDQIVGPCTNYIPYRLSVCCSKTALEYLCSAQAQHTTSLRYSSLDLDQIVAKCTSWPSSTQFGYIVQHQNTGADLALSLAGCTTSSPMTSYGHVFPQGEVWIGSTPYSTGLKIDVIAPSAVLSQEDAQAMAGEVGAALENLLACGDRPLSDLIGNTFAT</sequence>
<proteinExistence type="inferred from homology"/>
<dbReference type="EC" id="6.3.3.-" evidence="1"/>
<dbReference type="EMBL" id="DS027694">
    <property type="protein sequence ID" value="EAW19749.1"/>
    <property type="molecule type" value="Genomic_DNA"/>
</dbReference>
<dbReference type="RefSeq" id="XP_001261646.1">
    <property type="nucleotide sequence ID" value="XM_001261645.1"/>
</dbReference>
<dbReference type="SMR" id="A1DA59"/>
<dbReference type="STRING" id="331117.A1DA59"/>
<dbReference type="EnsemblFungi" id="EAW19749">
    <property type="protein sequence ID" value="EAW19749"/>
    <property type="gene ID" value="NFIA_093690"/>
</dbReference>
<dbReference type="GeneID" id="4588679"/>
<dbReference type="KEGG" id="nfi:NFIA_093690"/>
<dbReference type="VEuPathDB" id="FungiDB:NFIA_093690"/>
<dbReference type="eggNOG" id="KOG1176">
    <property type="taxonomic scope" value="Eukaryota"/>
</dbReference>
<dbReference type="eggNOG" id="KOG1178">
    <property type="taxonomic scope" value="Eukaryota"/>
</dbReference>
<dbReference type="HOGENOM" id="CLU_000022_60_2_1"/>
<dbReference type="OMA" id="KFHHIIM"/>
<dbReference type="OrthoDB" id="416786at2759"/>
<dbReference type="Proteomes" id="UP000006702">
    <property type="component" value="Unassembled WGS sequence"/>
</dbReference>
<dbReference type="GO" id="GO:0005737">
    <property type="term" value="C:cytoplasm"/>
    <property type="evidence" value="ECO:0007669"/>
    <property type="project" value="TreeGrafter"/>
</dbReference>
<dbReference type="GO" id="GO:0016853">
    <property type="term" value="F:isomerase activity"/>
    <property type="evidence" value="ECO:0007669"/>
    <property type="project" value="UniProtKB-KW"/>
</dbReference>
<dbReference type="GO" id="GO:0016874">
    <property type="term" value="F:ligase activity"/>
    <property type="evidence" value="ECO:0007669"/>
    <property type="project" value="UniProtKB-KW"/>
</dbReference>
<dbReference type="GO" id="GO:0031177">
    <property type="term" value="F:phosphopantetheine binding"/>
    <property type="evidence" value="ECO:0007669"/>
    <property type="project" value="TreeGrafter"/>
</dbReference>
<dbReference type="GO" id="GO:0009820">
    <property type="term" value="P:alkaloid metabolic process"/>
    <property type="evidence" value="ECO:0007669"/>
    <property type="project" value="UniProtKB-KW"/>
</dbReference>
<dbReference type="GO" id="GO:0043041">
    <property type="term" value="P:amino acid activation for nonribosomal peptide biosynthetic process"/>
    <property type="evidence" value="ECO:0007669"/>
    <property type="project" value="TreeGrafter"/>
</dbReference>
<dbReference type="GO" id="GO:0044550">
    <property type="term" value="P:secondary metabolite biosynthetic process"/>
    <property type="evidence" value="ECO:0007669"/>
    <property type="project" value="TreeGrafter"/>
</dbReference>
<dbReference type="CDD" id="cd05918">
    <property type="entry name" value="A_NRPS_SidN3_like"/>
    <property type="match status" value="2"/>
</dbReference>
<dbReference type="CDD" id="cd19542">
    <property type="entry name" value="CT_NRPS-like"/>
    <property type="match status" value="1"/>
</dbReference>
<dbReference type="CDD" id="cd19545">
    <property type="entry name" value="FUM14_C_NRPS-like"/>
    <property type="match status" value="1"/>
</dbReference>
<dbReference type="FunFam" id="3.30.300.30:FF:000015">
    <property type="entry name" value="Nonribosomal peptide synthase SidD"/>
    <property type="match status" value="2"/>
</dbReference>
<dbReference type="FunFam" id="3.40.50.12780:FF:000014">
    <property type="entry name" value="Nonribosomal peptide synthetase 1"/>
    <property type="match status" value="2"/>
</dbReference>
<dbReference type="FunFam" id="1.10.1200.10:FF:000028">
    <property type="entry name" value="Nonribosomal peptide synthetase 13"/>
    <property type="match status" value="1"/>
</dbReference>
<dbReference type="Gene3D" id="3.30.300.30">
    <property type="match status" value="2"/>
</dbReference>
<dbReference type="Gene3D" id="1.10.1200.10">
    <property type="entry name" value="ACP-like"/>
    <property type="match status" value="2"/>
</dbReference>
<dbReference type="Gene3D" id="3.30.559.10">
    <property type="entry name" value="Chloramphenicol acetyltransferase-like domain"/>
    <property type="match status" value="2"/>
</dbReference>
<dbReference type="Gene3D" id="3.40.50.12780">
    <property type="entry name" value="N-terminal domain of ligase-like"/>
    <property type="match status" value="2"/>
</dbReference>
<dbReference type="Gene3D" id="3.30.559.30">
    <property type="entry name" value="Nonribosomal peptide synthetase, condensation domain"/>
    <property type="match status" value="2"/>
</dbReference>
<dbReference type="InterPro" id="IPR010071">
    <property type="entry name" value="AA_adenyl_dom"/>
</dbReference>
<dbReference type="InterPro" id="IPR036736">
    <property type="entry name" value="ACP-like_sf"/>
</dbReference>
<dbReference type="InterPro" id="IPR045851">
    <property type="entry name" value="AMP-bd_C_sf"/>
</dbReference>
<dbReference type="InterPro" id="IPR020845">
    <property type="entry name" value="AMP-binding_CS"/>
</dbReference>
<dbReference type="InterPro" id="IPR000873">
    <property type="entry name" value="AMP-dep_synth/lig_dom"/>
</dbReference>
<dbReference type="InterPro" id="IPR042099">
    <property type="entry name" value="ANL_N_sf"/>
</dbReference>
<dbReference type="InterPro" id="IPR023213">
    <property type="entry name" value="CAT-like_dom_sf"/>
</dbReference>
<dbReference type="InterPro" id="IPR001242">
    <property type="entry name" value="Condensatn"/>
</dbReference>
<dbReference type="InterPro" id="IPR009081">
    <property type="entry name" value="PP-bd_ACP"/>
</dbReference>
<dbReference type="InterPro" id="IPR006162">
    <property type="entry name" value="Ppantetheine_attach_site"/>
</dbReference>
<dbReference type="NCBIfam" id="TIGR01733">
    <property type="entry name" value="AA-adenyl-dom"/>
    <property type="match status" value="1"/>
</dbReference>
<dbReference type="PANTHER" id="PTHR45527:SF16">
    <property type="entry name" value="NONRIBOSOMAL PEPTIDE SYNTHASE ATNA-RELATED"/>
    <property type="match status" value="1"/>
</dbReference>
<dbReference type="PANTHER" id="PTHR45527">
    <property type="entry name" value="NONRIBOSOMAL PEPTIDE SYNTHETASE"/>
    <property type="match status" value="1"/>
</dbReference>
<dbReference type="Pfam" id="PF00501">
    <property type="entry name" value="AMP-binding"/>
    <property type="match status" value="2"/>
</dbReference>
<dbReference type="Pfam" id="PF00668">
    <property type="entry name" value="Condensation"/>
    <property type="match status" value="2"/>
</dbReference>
<dbReference type="Pfam" id="PF00550">
    <property type="entry name" value="PP-binding"/>
    <property type="match status" value="2"/>
</dbReference>
<dbReference type="SUPFAM" id="SSF56801">
    <property type="entry name" value="Acetyl-CoA synthetase-like"/>
    <property type="match status" value="2"/>
</dbReference>
<dbReference type="SUPFAM" id="SSF47336">
    <property type="entry name" value="ACP-like"/>
    <property type="match status" value="2"/>
</dbReference>
<dbReference type="SUPFAM" id="SSF52777">
    <property type="entry name" value="CoA-dependent acyltransferases"/>
    <property type="match status" value="4"/>
</dbReference>
<dbReference type="PROSITE" id="PS00455">
    <property type="entry name" value="AMP_BINDING"/>
    <property type="match status" value="2"/>
</dbReference>
<dbReference type="PROSITE" id="PS50075">
    <property type="entry name" value="CARRIER"/>
    <property type="match status" value="2"/>
</dbReference>
<dbReference type="PROSITE" id="PS00012">
    <property type="entry name" value="PHOSPHOPANTETHEINE"/>
    <property type="match status" value="2"/>
</dbReference>